<name>LUXS_SALTY</name>
<sequence>MPLLDSFAVDHTRMQAPAVRVAKTMNTPHGDAITVFDLRFCIPNKEVMPEKGIHTLEHLFAGFMRDHLNGNGVEIIDISPMGCRTGFYMSLIGTPDEQRVADAWKAAMADVLKVQDQNQIPELNVYQCGTYQMHSLSEAQDIARHILERDVRVNSNKELALPKEKLQELHI</sequence>
<keyword id="KW-0071">Autoinducer synthesis</keyword>
<keyword id="KW-0408">Iron</keyword>
<keyword id="KW-0456">Lyase</keyword>
<keyword id="KW-0479">Metal-binding</keyword>
<keyword id="KW-0673">Quorum sensing</keyword>
<keyword id="KW-1185">Reference proteome</keyword>
<dbReference type="EC" id="4.4.1.21"/>
<dbReference type="EMBL" id="AF268390">
    <property type="protein sequence ID" value="AAF73475.1"/>
    <property type="molecule type" value="Genomic_DNA"/>
</dbReference>
<dbReference type="EMBL" id="AE006468">
    <property type="protein sequence ID" value="AAL21702.1"/>
    <property type="molecule type" value="Genomic_DNA"/>
</dbReference>
<dbReference type="RefSeq" id="NP_461743.1">
    <property type="nucleotide sequence ID" value="NC_003197.2"/>
</dbReference>
<dbReference type="RefSeq" id="WP_001130194.1">
    <property type="nucleotide sequence ID" value="NC_003197.2"/>
</dbReference>
<dbReference type="SMR" id="Q9L4T0"/>
<dbReference type="STRING" id="99287.STM2817"/>
<dbReference type="PaxDb" id="99287-STM2817"/>
<dbReference type="GeneID" id="1254340"/>
<dbReference type="KEGG" id="stm:STM2817"/>
<dbReference type="PATRIC" id="fig|99287.12.peg.2975"/>
<dbReference type="HOGENOM" id="CLU_107531_2_0_6"/>
<dbReference type="OMA" id="DVSPMGC"/>
<dbReference type="PhylomeDB" id="Q9L4T0"/>
<dbReference type="BioCyc" id="SENT99287:STM2817-MONOMER"/>
<dbReference type="Proteomes" id="UP000001014">
    <property type="component" value="Chromosome"/>
</dbReference>
<dbReference type="GO" id="GO:0005829">
    <property type="term" value="C:cytosol"/>
    <property type="evidence" value="ECO:0000318"/>
    <property type="project" value="GO_Central"/>
</dbReference>
<dbReference type="GO" id="GO:0005506">
    <property type="term" value="F:iron ion binding"/>
    <property type="evidence" value="ECO:0007669"/>
    <property type="project" value="InterPro"/>
</dbReference>
<dbReference type="GO" id="GO:0043768">
    <property type="term" value="F:S-ribosylhomocysteine lyase activity"/>
    <property type="evidence" value="ECO:0000318"/>
    <property type="project" value="GO_Central"/>
</dbReference>
<dbReference type="GO" id="GO:0019284">
    <property type="term" value="P:L-methionine salvage from S-adenosylmethionine"/>
    <property type="evidence" value="ECO:0000318"/>
    <property type="project" value="GO_Central"/>
</dbReference>
<dbReference type="GO" id="GO:0009372">
    <property type="term" value="P:quorum sensing"/>
    <property type="evidence" value="ECO:0007669"/>
    <property type="project" value="UniProtKB-UniRule"/>
</dbReference>
<dbReference type="FunFam" id="3.30.1360.80:FF:000001">
    <property type="entry name" value="S-ribosylhomocysteine lyase"/>
    <property type="match status" value="1"/>
</dbReference>
<dbReference type="Gene3D" id="3.30.1360.80">
    <property type="entry name" value="S-ribosylhomocysteinase (LuxS)"/>
    <property type="match status" value="1"/>
</dbReference>
<dbReference type="HAMAP" id="MF_00091">
    <property type="entry name" value="LuxS"/>
    <property type="match status" value="1"/>
</dbReference>
<dbReference type="InterPro" id="IPR037005">
    <property type="entry name" value="LuxS_sf"/>
</dbReference>
<dbReference type="InterPro" id="IPR011249">
    <property type="entry name" value="Metalloenz_LuxS/M16"/>
</dbReference>
<dbReference type="InterPro" id="IPR003815">
    <property type="entry name" value="S-ribosylhomocysteinase"/>
</dbReference>
<dbReference type="NCBIfam" id="NF002602">
    <property type="entry name" value="PRK02260.1-2"/>
    <property type="match status" value="1"/>
</dbReference>
<dbReference type="PANTHER" id="PTHR35799">
    <property type="entry name" value="S-RIBOSYLHOMOCYSTEINE LYASE"/>
    <property type="match status" value="1"/>
</dbReference>
<dbReference type="PANTHER" id="PTHR35799:SF1">
    <property type="entry name" value="S-RIBOSYLHOMOCYSTEINE LYASE"/>
    <property type="match status" value="1"/>
</dbReference>
<dbReference type="Pfam" id="PF02664">
    <property type="entry name" value="LuxS"/>
    <property type="match status" value="1"/>
</dbReference>
<dbReference type="PIRSF" id="PIRSF006160">
    <property type="entry name" value="AI2"/>
    <property type="match status" value="1"/>
</dbReference>
<dbReference type="PRINTS" id="PR01487">
    <property type="entry name" value="LUXSPROTEIN"/>
</dbReference>
<dbReference type="SUPFAM" id="SSF63411">
    <property type="entry name" value="LuxS/MPP-like metallohydrolase"/>
    <property type="match status" value="1"/>
</dbReference>
<gene>
    <name type="primary">luxS</name>
    <name type="ordered locus">STM2817</name>
</gene>
<organism>
    <name type="scientific">Salmonella typhimurium (strain LT2 / SGSC1412 / ATCC 700720)</name>
    <dbReference type="NCBI Taxonomy" id="99287"/>
    <lineage>
        <taxon>Bacteria</taxon>
        <taxon>Pseudomonadati</taxon>
        <taxon>Pseudomonadota</taxon>
        <taxon>Gammaproteobacteria</taxon>
        <taxon>Enterobacterales</taxon>
        <taxon>Enterobacteriaceae</taxon>
        <taxon>Salmonella</taxon>
    </lineage>
</organism>
<accession>Q9L4T0</accession>
<comment type="function">
    <text evidence="1">Involved in the synthesis of autoinducer 2 (AI-2) which is secreted by bacteria and is used to communicate both the cell density and the metabolic potential of the environment. The regulation of gene expression in response to changes in cell density is called quorum sensing. Catalyzes the transformation of S-ribosylhomocysteine (RHC) to homocysteine (HC) and 4,5-dihydroxy-2,3-pentadione (DPD) (By similarity).</text>
</comment>
<comment type="catalytic activity">
    <reaction>
        <text>S-(5-deoxy-D-ribos-5-yl)-L-homocysteine = (S)-4,5-dihydroxypentane-2,3-dione + L-homocysteine</text>
        <dbReference type="Rhea" id="RHEA:17753"/>
        <dbReference type="ChEBI" id="CHEBI:29484"/>
        <dbReference type="ChEBI" id="CHEBI:58195"/>
        <dbReference type="ChEBI" id="CHEBI:58199"/>
        <dbReference type="EC" id="4.4.1.21"/>
    </reaction>
</comment>
<comment type="cofactor">
    <cofactor evidence="1">
        <name>Fe cation</name>
        <dbReference type="ChEBI" id="CHEBI:24875"/>
    </cofactor>
    <text evidence="1">Binds 1 Fe cation per subunit.</text>
</comment>
<comment type="subunit">
    <text evidence="1">Homodimer.</text>
</comment>
<comment type="similarity">
    <text evidence="2">Belongs to the LuxS family.</text>
</comment>
<reference key="1">
    <citation type="submission" date="2000-05" db="EMBL/GenBank/DDBJ databases">
        <title>Salmonella typhimurium luxS gene.</title>
        <authorList>
            <person name="Rychlik I."/>
            <person name="Sevcik M."/>
            <person name="Sebkova A."/>
            <person name="Volf J."/>
        </authorList>
    </citation>
    <scope>NUCLEOTIDE SEQUENCE [GENOMIC DNA]</scope>
</reference>
<reference key="2">
    <citation type="journal article" date="2001" name="Nature">
        <title>Complete genome sequence of Salmonella enterica serovar Typhimurium LT2.</title>
        <authorList>
            <person name="McClelland M."/>
            <person name="Sanderson K.E."/>
            <person name="Spieth J."/>
            <person name="Clifton S.W."/>
            <person name="Latreille P."/>
            <person name="Courtney L."/>
            <person name="Porwollik S."/>
            <person name="Ali J."/>
            <person name="Dante M."/>
            <person name="Du F."/>
            <person name="Hou S."/>
            <person name="Layman D."/>
            <person name="Leonard S."/>
            <person name="Nguyen C."/>
            <person name="Scott K."/>
            <person name="Holmes A."/>
            <person name="Grewal N."/>
            <person name="Mulvaney E."/>
            <person name="Ryan E."/>
            <person name="Sun H."/>
            <person name="Florea L."/>
            <person name="Miller W."/>
            <person name="Stoneking T."/>
            <person name="Nhan M."/>
            <person name="Waterston R."/>
            <person name="Wilson R.K."/>
        </authorList>
    </citation>
    <scope>NUCLEOTIDE SEQUENCE [LARGE SCALE GENOMIC DNA]</scope>
    <source>
        <strain>LT2 / SGSC1412 / ATCC 700720</strain>
    </source>
</reference>
<proteinExistence type="inferred from homology"/>
<protein>
    <recommendedName>
        <fullName>S-ribosylhomocysteine lyase</fullName>
        <ecNumber>4.4.1.21</ecNumber>
    </recommendedName>
    <alternativeName>
        <fullName>AI-2 synthesis protein</fullName>
    </alternativeName>
    <alternativeName>
        <fullName>Autoinducer-2 production protein LuxS</fullName>
    </alternativeName>
</protein>
<evidence type="ECO:0000250" key="1"/>
<evidence type="ECO:0000305" key="2"/>
<feature type="initiator methionine" description="Removed" evidence="1">
    <location>
        <position position="1"/>
    </location>
</feature>
<feature type="chain" id="PRO_0000172249" description="S-ribosylhomocysteine lyase">
    <location>
        <begin position="2"/>
        <end position="171"/>
    </location>
</feature>
<feature type="binding site" evidence="1">
    <location>
        <position position="54"/>
    </location>
    <ligand>
        <name>Fe cation</name>
        <dbReference type="ChEBI" id="CHEBI:24875"/>
    </ligand>
</feature>
<feature type="binding site" evidence="1">
    <location>
        <position position="58"/>
    </location>
    <ligand>
        <name>Fe cation</name>
        <dbReference type="ChEBI" id="CHEBI:24875"/>
    </ligand>
</feature>
<feature type="binding site" evidence="1">
    <location>
        <position position="128"/>
    </location>
    <ligand>
        <name>Fe cation</name>
        <dbReference type="ChEBI" id="CHEBI:24875"/>
    </ligand>
</feature>